<sequence length="184" mass="19857">MEISGSIQASLGGRYALALFEVAQEKGQIDTVAASLGKFDEAFAQARELRLLANNQIFSRKHVEKAIAALVPVLAIDDLTAKFLNLLAAKGRLGAFPEIASAYRQYVADLRSEKVADVITAHPLSDEQKSTLTARLKEQLKADVQINATVDPSILGGMIVRLGSRQIDGSIRSKLHMLAQAMKG</sequence>
<gene>
    <name evidence="1" type="primary">atpH</name>
    <name type="ordered locus">ZMO0238</name>
</gene>
<organism>
    <name type="scientific">Zymomonas mobilis subsp. mobilis (strain ATCC 31821 / ZM4 / CP4)</name>
    <dbReference type="NCBI Taxonomy" id="264203"/>
    <lineage>
        <taxon>Bacteria</taxon>
        <taxon>Pseudomonadati</taxon>
        <taxon>Pseudomonadota</taxon>
        <taxon>Alphaproteobacteria</taxon>
        <taxon>Sphingomonadales</taxon>
        <taxon>Zymomonadaceae</taxon>
        <taxon>Zymomonas</taxon>
    </lineage>
</organism>
<accession>Q5NQZ2</accession>
<protein>
    <recommendedName>
        <fullName evidence="1">ATP synthase subunit delta</fullName>
    </recommendedName>
    <alternativeName>
        <fullName evidence="1">ATP synthase F(1) sector subunit delta</fullName>
    </alternativeName>
    <alternativeName>
        <fullName evidence="1">F-type ATPase subunit delta</fullName>
        <shortName evidence="1">F-ATPase subunit delta</shortName>
    </alternativeName>
</protein>
<reference key="1">
    <citation type="journal article" date="2005" name="Nat. Biotechnol.">
        <title>The genome sequence of the ethanologenic bacterium Zymomonas mobilis ZM4.</title>
        <authorList>
            <person name="Seo J.-S."/>
            <person name="Chong H."/>
            <person name="Park H.S."/>
            <person name="Yoon K.-O."/>
            <person name="Jung C."/>
            <person name="Kim J.J."/>
            <person name="Hong J.H."/>
            <person name="Kim H."/>
            <person name="Kim J.-H."/>
            <person name="Kil J.-I."/>
            <person name="Park C.J."/>
            <person name="Oh H.-M."/>
            <person name="Lee J.-S."/>
            <person name="Jin S.-J."/>
            <person name="Um H.-W."/>
            <person name="Lee H.-J."/>
            <person name="Oh S.-J."/>
            <person name="Kim J.Y."/>
            <person name="Kang H.L."/>
            <person name="Lee S.Y."/>
            <person name="Lee K.J."/>
            <person name="Kang H.S."/>
        </authorList>
    </citation>
    <scope>NUCLEOTIDE SEQUENCE [LARGE SCALE GENOMIC DNA]</scope>
    <source>
        <strain>ATCC 31821 / ZM4 / CP4</strain>
    </source>
</reference>
<name>ATPD_ZYMMO</name>
<keyword id="KW-0066">ATP synthesis</keyword>
<keyword id="KW-0997">Cell inner membrane</keyword>
<keyword id="KW-1003">Cell membrane</keyword>
<keyword id="KW-0139">CF(1)</keyword>
<keyword id="KW-0375">Hydrogen ion transport</keyword>
<keyword id="KW-0406">Ion transport</keyword>
<keyword id="KW-0472">Membrane</keyword>
<keyword id="KW-1185">Reference proteome</keyword>
<keyword id="KW-0813">Transport</keyword>
<proteinExistence type="inferred from homology"/>
<evidence type="ECO:0000255" key="1">
    <source>
        <dbReference type="HAMAP-Rule" id="MF_01416"/>
    </source>
</evidence>
<dbReference type="EMBL" id="AE008692">
    <property type="protein sequence ID" value="AAV88862.1"/>
    <property type="molecule type" value="Genomic_DNA"/>
</dbReference>
<dbReference type="RefSeq" id="WP_011240183.1">
    <property type="nucleotide sequence ID" value="NZ_CP035711.1"/>
</dbReference>
<dbReference type="SMR" id="Q5NQZ2"/>
<dbReference type="STRING" id="264203.ZMO0238"/>
<dbReference type="KEGG" id="zmo:ZMO0238"/>
<dbReference type="eggNOG" id="COG0712">
    <property type="taxonomic scope" value="Bacteria"/>
</dbReference>
<dbReference type="HOGENOM" id="CLU_085114_0_1_5"/>
<dbReference type="Proteomes" id="UP000001173">
    <property type="component" value="Chromosome"/>
</dbReference>
<dbReference type="GO" id="GO:0005886">
    <property type="term" value="C:plasma membrane"/>
    <property type="evidence" value="ECO:0007669"/>
    <property type="project" value="UniProtKB-SubCell"/>
</dbReference>
<dbReference type="GO" id="GO:0045259">
    <property type="term" value="C:proton-transporting ATP synthase complex"/>
    <property type="evidence" value="ECO:0007669"/>
    <property type="project" value="UniProtKB-KW"/>
</dbReference>
<dbReference type="GO" id="GO:0046933">
    <property type="term" value="F:proton-transporting ATP synthase activity, rotational mechanism"/>
    <property type="evidence" value="ECO:0007669"/>
    <property type="project" value="UniProtKB-UniRule"/>
</dbReference>
<dbReference type="Gene3D" id="1.10.520.20">
    <property type="entry name" value="N-terminal domain of the delta subunit of the F1F0-ATP synthase"/>
    <property type="match status" value="1"/>
</dbReference>
<dbReference type="HAMAP" id="MF_01416">
    <property type="entry name" value="ATP_synth_delta_bact"/>
    <property type="match status" value="1"/>
</dbReference>
<dbReference type="InterPro" id="IPR026015">
    <property type="entry name" value="ATP_synth_OSCP/delta_N_sf"/>
</dbReference>
<dbReference type="InterPro" id="IPR020781">
    <property type="entry name" value="ATPase_OSCP/d_CS"/>
</dbReference>
<dbReference type="InterPro" id="IPR000711">
    <property type="entry name" value="ATPase_OSCP/dsu"/>
</dbReference>
<dbReference type="NCBIfam" id="TIGR01145">
    <property type="entry name" value="ATP_synt_delta"/>
    <property type="match status" value="1"/>
</dbReference>
<dbReference type="NCBIfam" id="NF004406">
    <property type="entry name" value="PRK05758.3-2"/>
    <property type="match status" value="1"/>
</dbReference>
<dbReference type="PANTHER" id="PTHR11910">
    <property type="entry name" value="ATP SYNTHASE DELTA CHAIN"/>
    <property type="match status" value="1"/>
</dbReference>
<dbReference type="Pfam" id="PF00213">
    <property type="entry name" value="OSCP"/>
    <property type="match status" value="1"/>
</dbReference>
<dbReference type="PRINTS" id="PR00125">
    <property type="entry name" value="ATPASEDELTA"/>
</dbReference>
<dbReference type="SUPFAM" id="SSF47928">
    <property type="entry name" value="N-terminal domain of the delta subunit of the F1F0-ATP synthase"/>
    <property type="match status" value="1"/>
</dbReference>
<dbReference type="PROSITE" id="PS00389">
    <property type="entry name" value="ATPASE_DELTA"/>
    <property type="match status" value="1"/>
</dbReference>
<comment type="function">
    <text evidence="1">F(1)F(0) ATP synthase produces ATP from ADP in the presence of a proton or sodium gradient. F-type ATPases consist of two structural domains, F(1) containing the extramembraneous catalytic core and F(0) containing the membrane proton channel, linked together by a central stalk and a peripheral stalk. During catalysis, ATP synthesis in the catalytic domain of F(1) is coupled via a rotary mechanism of the central stalk subunits to proton translocation.</text>
</comment>
<comment type="function">
    <text evidence="1">This protein is part of the stalk that links CF(0) to CF(1). It either transmits conformational changes from CF(0) to CF(1) or is implicated in proton conduction.</text>
</comment>
<comment type="subunit">
    <text evidence="1">F-type ATPases have 2 components, F(1) - the catalytic core - and F(0) - the membrane proton channel. F(1) has five subunits: alpha(3), beta(3), gamma(1), delta(1), epsilon(1). F(0) has three main subunits: a(1), b(2) and c(10-14). The alpha and beta chains form an alternating ring which encloses part of the gamma chain. F(1) is attached to F(0) by a central stalk formed by the gamma and epsilon chains, while a peripheral stalk is formed by the delta and b chains.</text>
</comment>
<comment type="subcellular location">
    <subcellularLocation>
        <location evidence="1">Cell inner membrane</location>
        <topology evidence="1">Peripheral membrane protein</topology>
    </subcellularLocation>
</comment>
<comment type="similarity">
    <text evidence="1">Belongs to the ATPase delta chain family.</text>
</comment>
<feature type="chain" id="PRO_0000371209" description="ATP synthase subunit delta">
    <location>
        <begin position="1"/>
        <end position="184"/>
    </location>
</feature>